<gene>
    <name evidence="1" type="primary">nqrE</name>
    <name type="ordered locus">VCM66_2214</name>
</gene>
<sequence length="198" mass="21470">MEHYISLLVKSIFIENMALSFFLGMCTFLAVSKKVKTSFGLGIAVIVVLTISVPVNNLVYNLVLKPDALVEGVDLSFLNFITFIGVIAALVQILEMILDRFFPPLYNALGIFLPLITVNCAIFGGVSFMVQRDYSFAESVVYGFGSGVGWMLAIVALAGIREKMKYSDVPPGLRGLGITFITAGLMALGFMSFSGVQL</sequence>
<dbReference type="EC" id="7.2.1.1" evidence="1"/>
<dbReference type="EMBL" id="CP001233">
    <property type="protein sequence ID" value="ACP06515.1"/>
    <property type="molecule type" value="Genomic_DNA"/>
</dbReference>
<dbReference type="RefSeq" id="WP_000401432.1">
    <property type="nucleotide sequence ID" value="NC_012578.1"/>
</dbReference>
<dbReference type="SMR" id="C3LQ63"/>
<dbReference type="GeneID" id="88783116"/>
<dbReference type="KEGG" id="vcm:VCM66_2214"/>
<dbReference type="HOGENOM" id="CLU_095255_0_0_6"/>
<dbReference type="Proteomes" id="UP000001217">
    <property type="component" value="Chromosome I"/>
</dbReference>
<dbReference type="GO" id="GO:0009276">
    <property type="term" value="C:Gram-negative-bacterium-type cell wall"/>
    <property type="evidence" value="ECO:0007669"/>
    <property type="project" value="InterPro"/>
</dbReference>
<dbReference type="GO" id="GO:0005886">
    <property type="term" value="C:plasma membrane"/>
    <property type="evidence" value="ECO:0007669"/>
    <property type="project" value="UniProtKB-SubCell"/>
</dbReference>
<dbReference type="GO" id="GO:0016655">
    <property type="term" value="F:oxidoreductase activity, acting on NAD(P)H, quinone or similar compound as acceptor"/>
    <property type="evidence" value="ECO:0007669"/>
    <property type="project" value="UniProtKB-UniRule"/>
</dbReference>
<dbReference type="GO" id="GO:0022904">
    <property type="term" value="P:respiratory electron transport chain"/>
    <property type="evidence" value="ECO:0007669"/>
    <property type="project" value="InterPro"/>
</dbReference>
<dbReference type="GO" id="GO:0006814">
    <property type="term" value="P:sodium ion transport"/>
    <property type="evidence" value="ECO:0007669"/>
    <property type="project" value="UniProtKB-UniRule"/>
</dbReference>
<dbReference type="HAMAP" id="MF_00429">
    <property type="entry name" value="NqrE"/>
    <property type="match status" value="1"/>
</dbReference>
<dbReference type="InterPro" id="IPR003667">
    <property type="entry name" value="NqrDE/RnfAE"/>
</dbReference>
<dbReference type="InterPro" id="IPR050133">
    <property type="entry name" value="NqrDE/RnfAE_oxidrdctase"/>
</dbReference>
<dbReference type="InterPro" id="IPR010967">
    <property type="entry name" value="NqrE"/>
</dbReference>
<dbReference type="NCBIfam" id="TIGR01940">
    <property type="entry name" value="nqrE"/>
    <property type="match status" value="1"/>
</dbReference>
<dbReference type="PANTHER" id="PTHR30335">
    <property type="entry name" value="INTEGRAL MEMBRANE PROTEIN OF SOXR-REDUCING COMPLEX"/>
    <property type="match status" value="1"/>
</dbReference>
<dbReference type="PANTHER" id="PTHR30335:SF1">
    <property type="entry name" value="NA(+)-TRANSLOCATING NADH-QUINONE REDUCTASE SUBUNIT E"/>
    <property type="match status" value="1"/>
</dbReference>
<dbReference type="Pfam" id="PF02508">
    <property type="entry name" value="Rnf-Nqr"/>
    <property type="match status" value="1"/>
</dbReference>
<dbReference type="PIRSF" id="PIRSF006102">
    <property type="entry name" value="NQR_DE"/>
    <property type="match status" value="1"/>
</dbReference>
<keyword id="KW-0997">Cell inner membrane</keyword>
<keyword id="KW-1003">Cell membrane</keyword>
<keyword id="KW-0406">Ion transport</keyword>
<keyword id="KW-0472">Membrane</keyword>
<keyword id="KW-0520">NAD</keyword>
<keyword id="KW-0915">Sodium</keyword>
<keyword id="KW-0739">Sodium transport</keyword>
<keyword id="KW-1278">Translocase</keyword>
<keyword id="KW-0812">Transmembrane</keyword>
<keyword id="KW-1133">Transmembrane helix</keyword>
<keyword id="KW-0813">Transport</keyword>
<keyword id="KW-0830">Ubiquinone</keyword>
<name>NQRE_VIBCM</name>
<protein>
    <recommendedName>
        <fullName evidence="1">Na(+)-translocating NADH-quinone reductase subunit E</fullName>
        <shortName evidence="1">Na(+)-NQR subunit E</shortName>
        <shortName evidence="1">Na(+)-translocating NQR subunit E</shortName>
        <ecNumber evidence="1">7.2.1.1</ecNumber>
    </recommendedName>
    <alternativeName>
        <fullName evidence="1">NQR complex subunit E</fullName>
    </alternativeName>
    <alternativeName>
        <fullName evidence="1">NQR-1 subunit E</fullName>
    </alternativeName>
</protein>
<comment type="function">
    <text evidence="1">NQR complex catalyzes the reduction of ubiquinone-1 to ubiquinol by two successive reactions, coupled with the transport of Na(+) ions from the cytoplasm to the periplasm. NqrA to NqrE are probably involved in the second step, the conversion of ubisemiquinone to ubiquinol.</text>
</comment>
<comment type="catalytic activity">
    <reaction evidence="1">
        <text>a ubiquinone + n Na(+)(in) + NADH + H(+) = a ubiquinol + n Na(+)(out) + NAD(+)</text>
        <dbReference type="Rhea" id="RHEA:47748"/>
        <dbReference type="Rhea" id="RHEA-COMP:9565"/>
        <dbReference type="Rhea" id="RHEA-COMP:9566"/>
        <dbReference type="ChEBI" id="CHEBI:15378"/>
        <dbReference type="ChEBI" id="CHEBI:16389"/>
        <dbReference type="ChEBI" id="CHEBI:17976"/>
        <dbReference type="ChEBI" id="CHEBI:29101"/>
        <dbReference type="ChEBI" id="CHEBI:57540"/>
        <dbReference type="ChEBI" id="CHEBI:57945"/>
        <dbReference type="EC" id="7.2.1.1"/>
    </reaction>
</comment>
<comment type="subunit">
    <text evidence="1">Composed of six subunits; NqrA, NqrB, NqrC, NqrD, NqrE and NqrF.</text>
</comment>
<comment type="subcellular location">
    <subcellularLocation>
        <location evidence="1">Cell inner membrane</location>
        <topology evidence="1">Multi-pass membrane protein</topology>
    </subcellularLocation>
</comment>
<comment type="similarity">
    <text evidence="1">Belongs to the NqrDE/RnfAE family.</text>
</comment>
<reference key="1">
    <citation type="journal article" date="2008" name="PLoS ONE">
        <title>A recalibrated molecular clock and independent origins for the cholera pandemic clones.</title>
        <authorList>
            <person name="Feng L."/>
            <person name="Reeves P.R."/>
            <person name="Lan R."/>
            <person name="Ren Y."/>
            <person name="Gao C."/>
            <person name="Zhou Z."/>
            <person name="Ren Y."/>
            <person name="Cheng J."/>
            <person name="Wang W."/>
            <person name="Wang J."/>
            <person name="Qian W."/>
            <person name="Li D."/>
            <person name="Wang L."/>
        </authorList>
    </citation>
    <scope>NUCLEOTIDE SEQUENCE [LARGE SCALE GENOMIC DNA]</scope>
    <source>
        <strain>M66-2</strain>
    </source>
</reference>
<proteinExistence type="inferred from homology"/>
<feature type="chain" id="PRO_1000134936" description="Na(+)-translocating NADH-quinone reductase subunit E">
    <location>
        <begin position="1"/>
        <end position="198"/>
    </location>
</feature>
<feature type="transmembrane region" description="Helical" evidence="1">
    <location>
        <begin position="11"/>
        <end position="31"/>
    </location>
</feature>
<feature type="transmembrane region" description="Helical" evidence="1">
    <location>
        <begin position="39"/>
        <end position="59"/>
    </location>
</feature>
<feature type="transmembrane region" description="Helical" evidence="1">
    <location>
        <begin position="77"/>
        <end position="97"/>
    </location>
</feature>
<feature type="transmembrane region" description="Helical" evidence="1">
    <location>
        <begin position="110"/>
        <end position="130"/>
    </location>
</feature>
<feature type="transmembrane region" description="Helical" evidence="1">
    <location>
        <begin position="140"/>
        <end position="160"/>
    </location>
</feature>
<feature type="transmembrane region" description="Helical" evidence="1">
    <location>
        <begin position="176"/>
        <end position="196"/>
    </location>
</feature>
<organism>
    <name type="scientific">Vibrio cholerae serotype O1 (strain M66-2)</name>
    <dbReference type="NCBI Taxonomy" id="579112"/>
    <lineage>
        <taxon>Bacteria</taxon>
        <taxon>Pseudomonadati</taxon>
        <taxon>Pseudomonadota</taxon>
        <taxon>Gammaproteobacteria</taxon>
        <taxon>Vibrionales</taxon>
        <taxon>Vibrionaceae</taxon>
        <taxon>Vibrio</taxon>
    </lineage>
</organism>
<evidence type="ECO:0000255" key="1">
    <source>
        <dbReference type="HAMAP-Rule" id="MF_00429"/>
    </source>
</evidence>
<accession>C3LQ63</accession>